<comment type="function">
    <text evidence="5">Pleiotropic ABC efflux transporter involved in the basal level of azole susceptibility (PubMed:26933209). Confers resistance to fluconazole, itraconazole and voriconazole (PubMed:26933209).</text>
</comment>
<comment type="catalytic activity">
    <reaction evidence="5">
        <text>itraconazole(in) + ATP + H2O = itraconazole(out) + ADP + phosphate + H(+)</text>
        <dbReference type="Rhea" id="RHEA:33503"/>
        <dbReference type="ChEBI" id="CHEBI:6076"/>
        <dbReference type="ChEBI" id="CHEBI:15377"/>
        <dbReference type="ChEBI" id="CHEBI:15378"/>
        <dbReference type="ChEBI" id="CHEBI:30616"/>
        <dbReference type="ChEBI" id="CHEBI:43474"/>
        <dbReference type="ChEBI" id="CHEBI:456216"/>
    </reaction>
    <physiologicalReaction direction="left-to-right" evidence="5">
        <dbReference type="Rhea" id="RHEA:33504"/>
    </physiologicalReaction>
</comment>
<comment type="catalytic activity">
    <reaction evidence="5">
        <text>voriconazole(in) + ATP + H2O = voriconazole(out) + ADP + phosphate + H(+)</text>
        <dbReference type="Rhea" id="RHEA:61912"/>
        <dbReference type="ChEBI" id="CHEBI:10023"/>
        <dbReference type="ChEBI" id="CHEBI:15377"/>
        <dbReference type="ChEBI" id="CHEBI:15378"/>
        <dbReference type="ChEBI" id="CHEBI:30616"/>
        <dbReference type="ChEBI" id="CHEBI:43474"/>
        <dbReference type="ChEBI" id="CHEBI:456216"/>
    </reaction>
    <physiologicalReaction direction="left-to-right" evidence="5">
        <dbReference type="Rhea" id="RHEA:61913"/>
    </physiologicalReaction>
</comment>
<comment type="catalytic activity">
    <reaction evidence="5">
        <text>fluconazole(in) + ATP + H2O = fluconazole(out) + ADP + phosphate + H(+)</text>
        <dbReference type="Rhea" id="RHEA:61916"/>
        <dbReference type="ChEBI" id="CHEBI:15377"/>
        <dbReference type="ChEBI" id="CHEBI:15378"/>
        <dbReference type="ChEBI" id="CHEBI:30616"/>
        <dbReference type="ChEBI" id="CHEBI:43474"/>
        <dbReference type="ChEBI" id="CHEBI:46081"/>
        <dbReference type="ChEBI" id="CHEBI:456216"/>
    </reaction>
</comment>
<comment type="subcellular location">
    <subcellularLocation>
        <location evidence="7">Cell membrane</location>
        <topology evidence="1">Multi-pass membrane protein</topology>
    </subcellularLocation>
</comment>
<comment type="induction">
    <text evidence="5">Expression is increased in clinical azole-resistant isolates.</text>
</comment>
<comment type="disruption phenotype">
    <text evidence="5">Exhibits enhanced susceptibility to itraconazole, however voriconazole susceptibility is less affected.</text>
</comment>
<comment type="similarity">
    <text evidence="7">Belongs to the ABC transporter superfamily. ABCG family. PDR (TC 3.A.1.205) subfamily.</text>
</comment>
<dbReference type="EMBL" id="AAHF01000002">
    <property type="protein sequence ID" value="EAL92840.1"/>
    <property type="molecule type" value="Genomic_DNA"/>
</dbReference>
<dbReference type="RefSeq" id="XP_754878.1">
    <property type="nucleotide sequence ID" value="XM_749785.1"/>
</dbReference>
<dbReference type="SMR" id="Q4WWW3"/>
<dbReference type="STRING" id="330879.Q4WWW3"/>
<dbReference type="GlyCosmos" id="Q4WWW3">
    <property type="glycosylation" value="6 sites, No reported glycans"/>
</dbReference>
<dbReference type="EnsemblFungi" id="EAL92840">
    <property type="protein sequence ID" value="EAL92840"/>
    <property type="gene ID" value="AFUA_3G07300"/>
</dbReference>
<dbReference type="GeneID" id="3512111"/>
<dbReference type="KEGG" id="afm:AFUA_3G07300"/>
<dbReference type="eggNOG" id="KOG0065">
    <property type="taxonomic scope" value="Eukaryota"/>
</dbReference>
<dbReference type="HOGENOM" id="CLU_000604_35_0_1"/>
<dbReference type="InParanoid" id="Q4WWW3"/>
<dbReference type="OMA" id="TGFVIRI"/>
<dbReference type="OrthoDB" id="245989at2759"/>
<dbReference type="Proteomes" id="UP000002530">
    <property type="component" value="Chromosome 3"/>
</dbReference>
<dbReference type="GO" id="GO:0005886">
    <property type="term" value="C:plasma membrane"/>
    <property type="evidence" value="ECO:0007669"/>
    <property type="project" value="UniProtKB-SubCell"/>
</dbReference>
<dbReference type="GO" id="GO:0140359">
    <property type="term" value="F:ABC-type transporter activity"/>
    <property type="evidence" value="ECO:0007669"/>
    <property type="project" value="InterPro"/>
</dbReference>
<dbReference type="GO" id="GO:0005524">
    <property type="term" value="F:ATP binding"/>
    <property type="evidence" value="ECO:0007669"/>
    <property type="project" value="UniProtKB-KW"/>
</dbReference>
<dbReference type="GO" id="GO:0016887">
    <property type="term" value="F:ATP hydrolysis activity"/>
    <property type="evidence" value="ECO:0007669"/>
    <property type="project" value="InterPro"/>
</dbReference>
<dbReference type="CDD" id="cd03232">
    <property type="entry name" value="ABCG_PDR_domain2"/>
    <property type="match status" value="1"/>
</dbReference>
<dbReference type="FunFam" id="3.40.50.300:FF:001601">
    <property type="entry name" value="ABC multidrug transporter"/>
    <property type="match status" value="1"/>
</dbReference>
<dbReference type="FunFam" id="3.40.50.300:FF:000054">
    <property type="entry name" value="ABC multidrug transporter atrF"/>
    <property type="match status" value="1"/>
</dbReference>
<dbReference type="Gene3D" id="3.40.50.300">
    <property type="entry name" value="P-loop containing nucleotide triphosphate hydrolases"/>
    <property type="match status" value="2"/>
</dbReference>
<dbReference type="InterPro" id="IPR003593">
    <property type="entry name" value="AAA+_ATPase"/>
</dbReference>
<dbReference type="InterPro" id="IPR013525">
    <property type="entry name" value="ABC2_TM"/>
</dbReference>
<dbReference type="InterPro" id="IPR029481">
    <property type="entry name" value="ABC_trans_N"/>
</dbReference>
<dbReference type="InterPro" id="IPR003439">
    <property type="entry name" value="ABC_transporter-like_ATP-bd"/>
</dbReference>
<dbReference type="InterPro" id="IPR043926">
    <property type="entry name" value="ABCG_dom"/>
</dbReference>
<dbReference type="InterPro" id="IPR034003">
    <property type="entry name" value="ABCG_PDR_2"/>
</dbReference>
<dbReference type="InterPro" id="IPR027417">
    <property type="entry name" value="P-loop_NTPase"/>
</dbReference>
<dbReference type="InterPro" id="IPR010929">
    <property type="entry name" value="PDR_CDR_ABC"/>
</dbReference>
<dbReference type="PANTHER" id="PTHR19241">
    <property type="entry name" value="ATP-BINDING CASSETTE TRANSPORTER"/>
    <property type="match status" value="1"/>
</dbReference>
<dbReference type="Pfam" id="PF01061">
    <property type="entry name" value="ABC2_membrane"/>
    <property type="match status" value="2"/>
</dbReference>
<dbReference type="Pfam" id="PF19055">
    <property type="entry name" value="ABC2_membrane_7"/>
    <property type="match status" value="1"/>
</dbReference>
<dbReference type="Pfam" id="PF00005">
    <property type="entry name" value="ABC_tran"/>
    <property type="match status" value="2"/>
</dbReference>
<dbReference type="Pfam" id="PF14510">
    <property type="entry name" value="ABC_trans_N"/>
    <property type="match status" value="1"/>
</dbReference>
<dbReference type="Pfam" id="PF06422">
    <property type="entry name" value="PDR_CDR"/>
    <property type="match status" value="2"/>
</dbReference>
<dbReference type="SMART" id="SM00382">
    <property type="entry name" value="AAA"/>
    <property type="match status" value="2"/>
</dbReference>
<dbReference type="SUPFAM" id="SSF52540">
    <property type="entry name" value="P-loop containing nucleoside triphosphate hydrolases"/>
    <property type="match status" value="2"/>
</dbReference>
<dbReference type="PROSITE" id="PS50893">
    <property type="entry name" value="ABC_TRANSPORTER_2"/>
    <property type="match status" value="2"/>
</dbReference>
<proteinExistence type="evidence at protein level"/>
<sequence length="1472" mass="164612">MRRSNVVPVHSLTSSTNTGRDSRGEKYDELTPVATRRASISPDEARYLTQLASRDNAVSRVSTVADISLDDPALNPENKDFDLYKWLRKVVHVLNEEGVPRKEASIFFQHLRVSGTGAALQLQKTVADIITAPFRRETWNFRNKTSKTILHDFNGMLHSGELLIVLGRPGSGCSTFLKTLSGELHGLNVDEKTVLHYSGIPQSTMIKEFKGEVVYNQEVDKHFPHLTVGQTLEFAAAVRTPSKRLGGMSRNEYAQMMTKVVMAVFGLSHTYNTKVGNDTVRGVPGGERKRVSIAEMALAGAPLAAWDNSTRGLDSATALKFVESLRLAADLNSSAHAVAIYQASQAIYDLFDKAVVLYEGRQIYFGPASKAKAFFERQGWFCPPRQTTGDFLTSVTNPIERQARPGMESQVPRTAAEFEAYWLESEEYKELQREMAAFQGETSSQGNEKLLEFQQRKRLAQASHTRPKSPYLLSIPMQIKLNTKRAYQRVWNERTSTMTTFIGNTILALIVGSVFYGTPTATAGFYAKGATLFYAVLLNALTAMTEINSLYSQRPIVEKHASFAFYHPATEAIAGVVSDIPVKFLMAIAFNIILYFLSGLRREPSQFFIYFLITFIIMFVMSAVFRTMAAITRTVSQAMTLAGVLILMLVIYTGFVVPVNYMHPWFKWIHYLNPIFYAFEILIANEFHGREFTCSQFIPVYPNLPGDSFVCSSRGAVAGRRTVSGDAYIEASYSYSYSHVWRNFGILIAFLIGFMVIYFVATELNSATTSSAEVLVFRRGHEPAHLKNGHEPGADEEAGAGKTVVSSSAEENKQDQGITSIPPQQDIFTWRDVVYDIEIKGEPRRLLDHVSGWVKPGTLTALMGVSGAGKTTLLDVLAHRTTMGVITGDMFVNGKPLDSSFQRKTGYVQQQDLHLETATVRESLRFSAMLRQPASVSKEEKYAYVEEVIKMLNMEDFAEAVVGVPGEGLNVEQRKLLTIGVELAAKPKLLLFLDEPTSGLDSQSSWAICNFLRKLADAGQAILCTIHQPSAILFEQFDQLLFLARGGKTVYFGPIGENSQTLLKYFESHGPRRCGDQENPAEYMLEVVNAGTNPRGENWFDLWKASKEAAGVQAEIDRIHESKRGEAESKDSTNPKDREHEEFAMPFFKQLPIVTVRVFQQYWRLPMYIAAKMMLGICAGLFIGFSFFKADTSLQGMQNVIFSVFMLCAIFSSLVQQIIPLFITQRALYEVRERPSKTYSWKAFMIANIIVEIPYQILMGILVFGCYYYAVNGVQSSDRQGLVLLFCIQFFIYASTFADFVIAALPDAETAGAIVTLQFSMALTFNGVMQTPEALPGFWIFMYRVSPFTYWVGGMAATQLHGRAVKCSAAETAIFNPPSGLTCQEYMADYMAVAPGHLSNPNATSSCEFCSLSVADQYLASVNIYWSERWRNFGIFWAYVVFDIAVAVMLYYCFRVKKWNFSFGKRKKSKAA</sequence>
<accession>Q4WWW3</accession>
<gene>
    <name evidence="6" type="primary">atrI</name>
    <name type="ORF">AFUA_3G07300</name>
</gene>
<reference key="1">
    <citation type="journal article" date="2005" name="Nature">
        <title>Genomic sequence of the pathogenic and allergenic filamentous fungus Aspergillus fumigatus.</title>
        <authorList>
            <person name="Nierman W.C."/>
            <person name="Pain A."/>
            <person name="Anderson M.J."/>
            <person name="Wortman J.R."/>
            <person name="Kim H.S."/>
            <person name="Arroyo J."/>
            <person name="Berriman M."/>
            <person name="Abe K."/>
            <person name="Archer D.B."/>
            <person name="Bermejo C."/>
            <person name="Bennett J.W."/>
            <person name="Bowyer P."/>
            <person name="Chen D."/>
            <person name="Collins M."/>
            <person name="Coulsen R."/>
            <person name="Davies R."/>
            <person name="Dyer P.S."/>
            <person name="Farman M.L."/>
            <person name="Fedorova N."/>
            <person name="Fedorova N.D."/>
            <person name="Feldblyum T.V."/>
            <person name="Fischer R."/>
            <person name="Fosker N."/>
            <person name="Fraser A."/>
            <person name="Garcia J.L."/>
            <person name="Garcia M.J."/>
            <person name="Goble A."/>
            <person name="Goldman G.H."/>
            <person name="Gomi K."/>
            <person name="Griffith-Jones S."/>
            <person name="Gwilliam R."/>
            <person name="Haas B.J."/>
            <person name="Haas H."/>
            <person name="Harris D.E."/>
            <person name="Horiuchi H."/>
            <person name="Huang J."/>
            <person name="Humphray S."/>
            <person name="Jimenez J."/>
            <person name="Keller N."/>
            <person name="Khouri H."/>
            <person name="Kitamoto K."/>
            <person name="Kobayashi T."/>
            <person name="Konzack S."/>
            <person name="Kulkarni R."/>
            <person name="Kumagai T."/>
            <person name="Lafton A."/>
            <person name="Latge J.-P."/>
            <person name="Li W."/>
            <person name="Lord A."/>
            <person name="Lu C."/>
            <person name="Majoros W.H."/>
            <person name="May G.S."/>
            <person name="Miller B.L."/>
            <person name="Mohamoud Y."/>
            <person name="Molina M."/>
            <person name="Monod M."/>
            <person name="Mouyna I."/>
            <person name="Mulligan S."/>
            <person name="Murphy L.D."/>
            <person name="O'Neil S."/>
            <person name="Paulsen I."/>
            <person name="Penalva M.A."/>
            <person name="Pertea M."/>
            <person name="Price C."/>
            <person name="Pritchard B.L."/>
            <person name="Quail M.A."/>
            <person name="Rabbinowitsch E."/>
            <person name="Rawlins N."/>
            <person name="Rajandream M.A."/>
            <person name="Reichard U."/>
            <person name="Renauld H."/>
            <person name="Robson G.D."/>
            <person name="Rodriguez de Cordoba S."/>
            <person name="Rodriguez-Pena J.M."/>
            <person name="Ronning C.M."/>
            <person name="Rutter S."/>
            <person name="Salzberg S.L."/>
            <person name="Sanchez M."/>
            <person name="Sanchez-Ferrero J.C."/>
            <person name="Saunders D."/>
            <person name="Seeger K."/>
            <person name="Squares R."/>
            <person name="Squares S."/>
            <person name="Takeuchi M."/>
            <person name="Tekaia F."/>
            <person name="Turner G."/>
            <person name="Vazquez de Aldana C.R."/>
            <person name="Weidman J."/>
            <person name="White O."/>
            <person name="Woodward J.R."/>
            <person name="Yu J.-H."/>
            <person name="Fraser C.M."/>
            <person name="Galagan J.E."/>
            <person name="Asai K."/>
            <person name="Machida M."/>
            <person name="Hall N."/>
            <person name="Barrell B.G."/>
            <person name="Denning D.W."/>
        </authorList>
    </citation>
    <scope>NUCLEOTIDE SEQUENCE [LARGE SCALE GENOMIC DNA]</scope>
    <source>
        <strain>ATCC MYA-4609 / CBS 101355 / FGSC A1100 / Af293</strain>
    </source>
</reference>
<reference key="2">
    <citation type="journal article" date="2016" name="Med. Mycol.">
        <title>Identification of Aspergillus fumigatus multidrug transporter genes and their potential involvement in antifungal resistance.</title>
        <authorList>
            <person name="Meneau I."/>
            <person name="Coste A.T."/>
            <person name="Sanglard D."/>
        </authorList>
    </citation>
    <scope>FUNCTION</scope>
    <scope>INDUCTION</scope>
    <scope>DISRUPTION PHENOTYPE</scope>
    <scope>CATALYTIC ACTIVITY</scope>
</reference>
<evidence type="ECO:0000255" key="1"/>
<evidence type="ECO:0000255" key="2">
    <source>
        <dbReference type="PROSITE-ProRule" id="PRU00434"/>
    </source>
</evidence>
<evidence type="ECO:0000255" key="3">
    <source>
        <dbReference type="PROSITE-ProRule" id="PRU00498"/>
    </source>
</evidence>
<evidence type="ECO:0000256" key="4">
    <source>
        <dbReference type="SAM" id="MobiDB-lite"/>
    </source>
</evidence>
<evidence type="ECO:0000269" key="5">
    <source>
    </source>
</evidence>
<evidence type="ECO:0000303" key="6">
    <source>
    </source>
</evidence>
<evidence type="ECO:0000305" key="7"/>
<name>ATRI_ASPFU</name>
<feature type="chain" id="PRO_0000445101" description="ABC multidrug transporter atrI">
    <location>
        <begin position="1"/>
        <end position="1472"/>
    </location>
</feature>
<feature type="transmembrane region" description="Helical" evidence="1">
    <location>
        <begin position="506"/>
        <end position="526"/>
    </location>
</feature>
<feature type="transmembrane region" description="Helical" evidence="1">
    <location>
        <begin position="530"/>
        <end position="550"/>
    </location>
</feature>
<feature type="transmembrane region" description="Helical" evidence="1">
    <location>
        <begin position="580"/>
        <end position="600"/>
    </location>
</feature>
<feature type="transmembrane region" description="Helical" evidence="1">
    <location>
        <begin position="605"/>
        <end position="625"/>
    </location>
</feature>
<feature type="transmembrane region" description="Helical" evidence="1">
    <location>
        <begin position="639"/>
        <end position="659"/>
    </location>
</feature>
<feature type="transmembrane region" description="Helical" evidence="1">
    <location>
        <begin position="664"/>
        <end position="684"/>
    </location>
</feature>
<feature type="transmembrane region" description="Helical" evidence="1">
    <location>
        <begin position="744"/>
        <end position="764"/>
    </location>
</feature>
<feature type="transmembrane region" description="Helical" evidence="1">
    <location>
        <begin position="1168"/>
        <end position="1188"/>
    </location>
</feature>
<feature type="transmembrane region" description="Helical" evidence="1">
    <location>
        <begin position="1204"/>
        <end position="1224"/>
    </location>
</feature>
<feature type="transmembrane region" description="Helical" evidence="1">
    <location>
        <begin position="1244"/>
        <end position="1264"/>
    </location>
</feature>
<feature type="transmembrane region" description="Helical" evidence="1">
    <location>
        <begin position="1282"/>
        <end position="1302"/>
    </location>
</feature>
<feature type="transmembrane region" description="Helical" evidence="1">
    <location>
        <begin position="1309"/>
        <end position="1329"/>
    </location>
</feature>
<feature type="transmembrane region" description="Helical" evidence="1">
    <location>
        <begin position="1337"/>
        <end position="1357"/>
    </location>
</feature>
<feature type="transmembrane region" description="Helical" evidence="1">
    <location>
        <begin position="1433"/>
        <end position="1453"/>
    </location>
</feature>
<feature type="domain" description="ABC transporter 1" evidence="2">
    <location>
        <begin position="134"/>
        <end position="384"/>
    </location>
</feature>
<feature type="domain" description="ABC transporter 2" evidence="2">
    <location>
        <begin position="828"/>
        <end position="1070"/>
    </location>
</feature>
<feature type="region of interest" description="Disordered" evidence="4">
    <location>
        <begin position="1"/>
        <end position="28"/>
    </location>
</feature>
<feature type="region of interest" description="Disordered" evidence="4">
    <location>
        <begin position="784"/>
        <end position="821"/>
    </location>
</feature>
<feature type="compositionally biased region" description="Basic and acidic residues" evidence="4">
    <location>
        <begin position="784"/>
        <end position="793"/>
    </location>
</feature>
<feature type="compositionally biased region" description="Polar residues" evidence="4">
    <location>
        <begin position="804"/>
        <end position="821"/>
    </location>
</feature>
<feature type="binding site" evidence="2">
    <location>
        <begin position="864"/>
        <end position="871"/>
    </location>
    <ligand>
        <name>ATP</name>
        <dbReference type="ChEBI" id="CHEBI:30616"/>
    </ligand>
</feature>
<feature type="glycosylation site" description="N-linked (GlcNAc...) asparagine" evidence="3">
    <location>
        <position position="143"/>
    </location>
</feature>
<feature type="glycosylation site" description="N-linked (GlcNAc...) asparagine" evidence="3">
    <location>
        <position position="277"/>
    </location>
</feature>
<feature type="glycosylation site" description="N-linked (GlcNAc...) asparagine" evidence="3">
    <location>
        <position position="308"/>
    </location>
</feature>
<feature type="glycosylation site" description="N-linked (GlcNAc...) asparagine" evidence="3">
    <location>
        <position position="332"/>
    </location>
</feature>
<feature type="glycosylation site" description="N-linked (GlcNAc...) asparagine" evidence="3">
    <location>
        <position position="1402"/>
    </location>
</feature>
<feature type="glycosylation site" description="N-linked (GlcNAc...) asparagine" evidence="3">
    <location>
        <position position="1460"/>
    </location>
</feature>
<organism>
    <name type="scientific">Aspergillus fumigatus (strain ATCC MYA-4609 / CBS 101355 / FGSC A1100 / Af293)</name>
    <name type="common">Neosartorya fumigata</name>
    <dbReference type="NCBI Taxonomy" id="330879"/>
    <lineage>
        <taxon>Eukaryota</taxon>
        <taxon>Fungi</taxon>
        <taxon>Dikarya</taxon>
        <taxon>Ascomycota</taxon>
        <taxon>Pezizomycotina</taxon>
        <taxon>Eurotiomycetes</taxon>
        <taxon>Eurotiomycetidae</taxon>
        <taxon>Eurotiales</taxon>
        <taxon>Aspergillaceae</taxon>
        <taxon>Aspergillus</taxon>
        <taxon>Aspergillus subgen. Fumigati</taxon>
    </lineage>
</organism>
<protein>
    <recommendedName>
        <fullName>ABC multidrug transporter atrI</fullName>
    </recommendedName>
</protein>
<keyword id="KW-0067">ATP-binding</keyword>
<keyword id="KW-1003">Cell membrane</keyword>
<keyword id="KW-0325">Glycoprotein</keyword>
<keyword id="KW-0472">Membrane</keyword>
<keyword id="KW-0547">Nucleotide-binding</keyword>
<keyword id="KW-1185">Reference proteome</keyword>
<keyword id="KW-0677">Repeat</keyword>
<keyword id="KW-0812">Transmembrane</keyword>
<keyword id="KW-1133">Transmembrane helix</keyword>
<keyword id="KW-0813">Transport</keyword>